<evidence type="ECO:0000255" key="1">
    <source>
        <dbReference type="HAMAP-Rule" id="MF_00152"/>
    </source>
</evidence>
<gene>
    <name evidence="1" type="primary">nfo</name>
    <name type="ordered locus">NIS_0286</name>
</gene>
<comment type="function">
    <text evidence="1">Endonuclease IV plays a role in DNA repair. It cleaves phosphodiester bonds at apurinic or apyrimidinic (AP) sites, generating a 3'-hydroxyl group and a 5'-terminal sugar phosphate.</text>
</comment>
<comment type="catalytic activity">
    <reaction evidence="1">
        <text>Endonucleolytic cleavage to 5'-phosphooligonucleotide end-products.</text>
        <dbReference type="EC" id="3.1.21.2"/>
    </reaction>
</comment>
<comment type="cofactor">
    <cofactor evidence="1">
        <name>Zn(2+)</name>
        <dbReference type="ChEBI" id="CHEBI:29105"/>
    </cofactor>
    <text evidence="1">Binds 3 Zn(2+) ions.</text>
</comment>
<comment type="similarity">
    <text evidence="1">Belongs to the AP endonuclease 2 family.</text>
</comment>
<proteinExistence type="inferred from homology"/>
<name>END4_NITSB</name>
<dbReference type="EC" id="3.1.21.2" evidence="1"/>
<dbReference type="EMBL" id="AP009178">
    <property type="protein sequence ID" value="BAF69400.1"/>
    <property type="molecule type" value="Genomic_DNA"/>
</dbReference>
<dbReference type="RefSeq" id="WP_012081663.1">
    <property type="nucleotide sequence ID" value="NC_009662.1"/>
</dbReference>
<dbReference type="SMR" id="A6Q1P1"/>
<dbReference type="FunCoup" id="A6Q1P1">
    <property type="interactions" value="244"/>
</dbReference>
<dbReference type="STRING" id="387092.NIS_0286"/>
<dbReference type="KEGG" id="nis:NIS_0286"/>
<dbReference type="eggNOG" id="COG0648">
    <property type="taxonomic scope" value="Bacteria"/>
</dbReference>
<dbReference type="HOGENOM" id="CLU_025885_0_4_7"/>
<dbReference type="InParanoid" id="A6Q1P1"/>
<dbReference type="OrthoDB" id="9805666at2"/>
<dbReference type="Proteomes" id="UP000001118">
    <property type="component" value="Chromosome"/>
</dbReference>
<dbReference type="GO" id="GO:0008833">
    <property type="term" value="F:deoxyribonuclease IV (phage-T4-induced) activity"/>
    <property type="evidence" value="ECO:0007669"/>
    <property type="project" value="UniProtKB-UniRule"/>
</dbReference>
<dbReference type="GO" id="GO:0003677">
    <property type="term" value="F:DNA binding"/>
    <property type="evidence" value="ECO:0007669"/>
    <property type="project" value="InterPro"/>
</dbReference>
<dbReference type="GO" id="GO:0003906">
    <property type="term" value="F:DNA-(apurinic or apyrimidinic site) endonuclease activity"/>
    <property type="evidence" value="ECO:0007669"/>
    <property type="project" value="TreeGrafter"/>
</dbReference>
<dbReference type="GO" id="GO:0008081">
    <property type="term" value="F:phosphoric diester hydrolase activity"/>
    <property type="evidence" value="ECO:0007669"/>
    <property type="project" value="TreeGrafter"/>
</dbReference>
<dbReference type="GO" id="GO:0008270">
    <property type="term" value="F:zinc ion binding"/>
    <property type="evidence" value="ECO:0007669"/>
    <property type="project" value="UniProtKB-UniRule"/>
</dbReference>
<dbReference type="GO" id="GO:0006284">
    <property type="term" value="P:base-excision repair"/>
    <property type="evidence" value="ECO:0007669"/>
    <property type="project" value="TreeGrafter"/>
</dbReference>
<dbReference type="CDD" id="cd00019">
    <property type="entry name" value="AP2Ec"/>
    <property type="match status" value="1"/>
</dbReference>
<dbReference type="FunFam" id="3.20.20.150:FF:000001">
    <property type="entry name" value="Probable endonuclease 4"/>
    <property type="match status" value="1"/>
</dbReference>
<dbReference type="Gene3D" id="3.20.20.150">
    <property type="entry name" value="Divalent-metal-dependent TIM barrel enzymes"/>
    <property type="match status" value="1"/>
</dbReference>
<dbReference type="HAMAP" id="MF_00152">
    <property type="entry name" value="Nfo"/>
    <property type="match status" value="1"/>
</dbReference>
<dbReference type="InterPro" id="IPR001719">
    <property type="entry name" value="AP_endonuc_2"/>
</dbReference>
<dbReference type="InterPro" id="IPR018246">
    <property type="entry name" value="AP_endonuc_F2_Zn_BS"/>
</dbReference>
<dbReference type="InterPro" id="IPR036237">
    <property type="entry name" value="Xyl_isomerase-like_sf"/>
</dbReference>
<dbReference type="InterPro" id="IPR013022">
    <property type="entry name" value="Xyl_isomerase-like_TIM-brl"/>
</dbReference>
<dbReference type="NCBIfam" id="TIGR00587">
    <property type="entry name" value="nfo"/>
    <property type="match status" value="1"/>
</dbReference>
<dbReference type="NCBIfam" id="NF002199">
    <property type="entry name" value="PRK01060.1-4"/>
    <property type="match status" value="1"/>
</dbReference>
<dbReference type="PANTHER" id="PTHR21445:SF0">
    <property type="entry name" value="APURINIC-APYRIMIDINIC ENDONUCLEASE"/>
    <property type="match status" value="1"/>
</dbReference>
<dbReference type="PANTHER" id="PTHR21445">
    <property type="entry name" value="ENDONUCLEASE IV ENDODEOXYRIBONUCLEASE IV"/>
    <property type="match status" value="1"/>
</dbReference>
<dbReference type="Pfam" id="PF01261">
    <property type="entry name" value="AP_endonuc_2"/>
    <property type="match status" value="1"/>
</dbReference>
<dbReference type="SMART" id="SM00518">
    <property type="entry name" value="AP2Ec"/>
    <property type="match status" value="1"/>
</dbReference>
<dbReference type="SUPFAM" id="SSF51658">
    <property type="entry name" value="Xylose isomerase-like"/>
    <property type="match status" value="1"/>
</dbReference>
<dbReference type="PROSITE" id="PS00729">
    <property type="entry name" value="AP_NUCLEASE_F2_1"/>
    <property type="match status" value="1"/>
</dbReference>
<dbReference type="PROSITE" id="PS00731">
    <property type="entry name" value="AP_NUCLEASE_F2_3"/>
    <property type="match status" value="1"/>
</dbReference>
<dbReference type="PROSITE" id="PS51432">
    <property type="entry name" value="AP_NUCLEASE_F2_4"/>
    <property type="match status" value="1"/>
</dbReference>
<accession>A6Q1P1</accession>
<sequence length="281" mass="31885">MAKYVGAHVSASGGVENAPKNAQAIGAKAFALFTKNQRQWKAKPLSKENIEKFNEHLECCGIEKKHILPHDSYLINLGHPEEEKRQKSLEAFLDEVRRCEQLGLDKLNFHPGSHLKKISEEECLDRIADAMNETLRQSSGVTLVIENTAGQGSNLGYKFEHLRYLIDKSIDKSRVGVCLDTAHMFAAGYDIRTKEAYDKTMQAFDEIVGFEYLKGMHINDSKAKFASRVDRHHSLGKGEIGLDAFRFIMNDPRLDDIPLILETIDDTIWDKEIELLYSFVE</sequence>
<keyword id="KW-0227">DNA damage</keyword>
<keyword id="KW-0234">DNA repair</keyword>
<keyword id="KW-0255">Endonuclease</keyword>
<keyword id="KW-0378">Hydrolase</keyword>
<keyword id="KW-0479">Metal-binding</keyword>
<keyword id="KW-0540">Nuclease</keyword>
<keyword id="KW-1185">Reference proteome</keyword>
<keyword id="KW-0862">Zinc</keyword>
<protein>
    <recommendedName>
        <fullName evidence="1">Probable endonuclease 4</fullName>
        <ecNumber evidence="1">3.1.21.2</ecNumber>
    </recommendedName>
    <alternativeName>
        <fullName evidence="1">Endodeoxyribonuclease IV</fullName>
    </alternativeName>
    <alternativeName>
        <fullName evidence="1">Endonuclease IV</fullName>
    </alternativeName>
</protein>
<feature type="chain" id="PRO_1000011326" description="Probable endonuclease 4">
    <location>
        <begin position="1"/>
        <end position="281"/>
    </location>
</feature>
<feature type="binding site" evidence="1">
    <location>
        <position position="70"/>
    </location>
    <ligand>
        <name>Zn(2+)</name>
        <dbReference type="ChEBI" id="CHEBI:29105"/>
        <label>1</label>
    </ligand>
</feature>
<feature type="binding site" evidence="1">
    <location>
        <position position="110"/>
    </location>
    <ligand>
        <name>Zn(2+)</name>
        <dbReference type="ChEBI" id="CHEBI:29105"/>
        <label>1</label>
    </ligand>
</feature>
<feature type="binding site" evidence="1">
    <location>
        <position position="146"/>
    </location>
    <ligand>
        <name>Zn(2+)</name>
        <dbReference type="ChEBI" id="CHEBI:29105"/>
        <label>1</label>
    </ligand>
</feature>
<feature type="binding site" evidence="1">
    <location>
        <position position="146"/>
    </location>
    <ligand>
        <name>Zn(2+)</name>
        <dbReference type="ChEBI" id="CHEBI:29105"/>
        <label>2</label>
    </ligand>
</feature>
<feature type="binding site" evidence="1">
    <location>
        <position position="180"/>
    </location>
    <ligand>
        <name>Zn(2+)</name>
        <dbReference type="ChEBI" id="CHEBI:29105"/>
        <label>2</label>
    </ligand>
</feature>
<feature type="binding site" evidence="1">
    <location>
        <position position="183"/>
    </location>
    <ligand>
        <name>Zn(2+)</name>
        <dbReference type="ChEBI" id="CHEBI:29105"/>
        <label>3</label>
    </ligand>
</feature>
<feature type="binding site" evidence="1">
    <location>
        <position position="217"/>
    </location>
    <ligand>
        <name>Zn(2+)</name>
        <dbReference type="ChEBI" id="CHEBI:29105"/>
        <label>2</label>
    </ligand>
</feature>
<feature type="binding site" evidence="1">
    <location>
        <position position="230"/>
    </location>
    <ligand>
        <name>Zn(2+)</name>
        <dbReference type="ChEBI" id="CHEBI:29105"/>
        <label>3</label>
    </ligand>
</feature>
<feature type="binding site" evidence="1">
    <location>
        <position position="232"/>
    </location>
    <ligand>
        <name>Zn(2+)</name>
        <dbReference type="ChEBI" id="CHEBI:29105"/>
        <label>3</label>
    </ligand>
</feature>
<feature type="binding site" evidence="1">
    <location>
        <position position="262"/>
    </location>
    <ligand>
        <name>Zn(2+)</name>
        <dbReference type="ChEBI" id="CHEBI:29105"/>
        <label>2</label>
    </ligand>
</feature>
<organism>
    <name type="scientific">Nitratiruptor sp. (strain SB155-2)</name>
    <dbReference type="NCBI Taxonomy" id="387092"/>
    <lineage>
        <taxon>Bacteria</taxon>
        <taxon>Pseudomonadati</taxon>
        <taxon>Campylobacterota</taxon>
        <taxon>Epsilonproteobacteria</taxon>
        <taxon>Nautiliales</taxon>
        <taxon>Nitratiruptoraceae</taxon>
        <taxon>Nitratiruptor</taxon>
    </lineage>
</organism>
<reference key="1">
    <citation type="journal article" date="2007" name="Proc. Natl. Acad. Sci. U.S.A.">
        <title>Deep-sea vent epsilon-proteobacterial genomes provide insights into emergence of pathogens.</title>
        <authorList>
            <person name="Nakagawa S."/>
            <person name="Takaki Y."/>
            <person name="Shimamura S."/>
            <person name="Reysenbach A.-L."/>
            <person name="Takai K."/>
            <person name="Horikoshi K."/>
        </authorList>
    </citation>
    <scope>NUCLEOTIDE SEQUENCE [LARGE SCALE GENOMIC DNA]</scope>
    <source>
        <strain>SB155-2</strain>
    </source>
</reference>